<gene>
    <name evidence="1" type="primary">psbM</name>
</gene>
<protein>
    <recommendedName>
        <fullName evidence="1">Photosystem II reaction center protein M</fullName>
        <shortName evidence="1">PSII-M</shortName>
    </recommendedName>
</protein>
<reference key="1">
    <citation type="journal article" date="2007" name="Mol. Phylogenet. Evol.">
        <title>Phylogenetic and evolutionary implications of complete chloroplast genome sequences of four early-diverging angiosperms: Buxus (Buxaceae), Chloranthus (Chloranthaceae), Dioscorea (Dioscoreaceae), and Illicium (Schisandraceae).</title>
        <authorList>
            <person name="Hansen D.R."/>
            <person name="Dastidar S.G."/>
            <person name="Cai Z."/>
            <person name="Penaflor C."/>
            <person name="Kuehl J.V."/>
            <person name="Boore J.L."/>
            <person name="Jansen R.K."/>
        </authorList>
    </citation>
    <scope>NUCLEOTIDE SEQUENCE [LARGE SCALE GENOMIC DNA]</scope>
</reference>
<accession>A6MMB6</accession>
<sequence>MEVNILAFIATALFILVPTAFLLIIYVKTVSQND</sequence>
<geneLocation type="chloroplast"/>
<name>PSBM_CHLSC</name>
<proteinExistence type="inferred from homology"/>
<keyword id="KW-0150">Chloroplast</keyword>
<keyword id="KW-0472">Membrane</keyword>
<keyword id="KW-0602">Photosynthesis</keyword>
<keyword id="KW-0604">Photosystem II</keyword>
<keyword id="KW-0934">Plastid</keyword>
<keyword id="KW-0674">Reaction center</keyword>
<keyword id="KW-0793">Thylakoid</keyword>
<keyword id="KW-0812">Transmembrane</keyword>
<keyword id="KW-1133">Transmembrane helix</keyword>
<evidence type="ECO:0000255" key="1">
    <source>
        <dbReference type="HAMAP-Rule" id="MF_00438"/>
    </source>
</evidence>
<comment type="function">
    <text evidence="1">One of the components of the core complex of photosystem II (PSII). PSII is a light-driven water:plastoquinone oxidoreductase that uses light energy to abstract electrons from H(2)O, generating O(2) and a proton gradient subsequently used for ATP formation. It consists of a core antenna complex that captures photons, and an electron transfer chain that converts photonic excitation into a charge separation. This subunit is found at the monomer-monomer interface.</text>
</comment>
<comment type="subunit">
    <text evidence="1">PSII is composed of 1 copy each of membrane proteins PsbA, PsbB, PsbC, PsbD, PsbE, PsbF, PsbH, PsbI, PsbJ, PsbK, PsbL, PsbM, PsbT, PsbX, PsbY, PsbZ, Psb30/Ycf12, at least 3 peripheral proteins of the oxygen-evolving complex and a large number of cofactors. It forms dimeric complexes.</text>
</comment>
<comment type="subcellular location">
    <subcellularLocation>
        <location evidence="1">Plastid</location>
        <location evidence="1">Chloroplast thylakoid membrane</location>
        <topology evidence="1">Single-pass membrane protein</topology>
    </subcellularLocation>
</comment>
<comment type="similarity">
    <text evidence="1">Belongs to the PsbM family.</text>
</comment>
<organism>
    <name type="scientific">Chloranthus spicatus</name>
    <name type="common">Chulantree</name>
    <name type="synonym">Nigrina spicata</name>
    <dbReference type="NCBI Taxonomy" id="13006"/>
    <lineage>
        <taxon>Eukaryota</taxon>
        <taxon>Viridiplantae</taxon>
        <taxon>Streptophyta</taxon>
        <taxon>Embryophyta</taxon>
        <taxon>Tracheophyta</taxon>
        <taxon>Spermatophyta</taxon>
        <taxon>Magnoliopsida</taxon>
        <taxon>Chloranthales</taxon>
        <taxon>Chloranthaceae</taxon>
        <taxon>Chloranthus</taxon>
    </lineage>
</organism>
<feature type="chain" id="PRO_0000325724" description="Photosystem II reaction center protein M">
    <location>
        <begin position="1"/>
        <end position="34"/>
    </location>
</feature>
<feature type="transmembrane region" description="Helical" evidence="1">
    <location>
        <begin position="5"/>
        <end position="25"/>
    </location>
</feature>
<dbReference type="EMBL" id="EF380352">
    <property type="protein sequence ID" value="ABQ43254.1"/>
    <property type="molecule type" value="Genomic_DNA"/>
</dbReference>
<dbReference type="RefSeq" id="YP_001294092.1">
    <property type="nucleotide sequence ID" value="NC_009598.1"/>
</dbReference>
<dbReference type="SMR" id="A6MMB6"/>
<dbReference type="GeneID" id="5236478"/>
<dbReference type="GO" id="GO:0009535">
    <property type="term" value="C:chloroplast thylakoid membrane"/>
    <property type="evidence" value="ECO:0007669"/>
    <property type="project" value="UniProtKB-SubCell"/>
</dbReference>
<dbReference type="GO" id="GO:0009523">
    <property type="term" value="C:photosystem II"/>
    <property type="evidence" value="ECO:0007669"/>
    <property type="project" value="UniProtKB-KW"/>
</dbReference>
<dbReference type="GO" id="GO:0019684">
    <property type="term" value="P:photosynthesis, light reaction"/>
    <property type="evidence" value="ECO:0007669"/>
    <property type="project" value="InterPro"/>
</dbReference>
<dbReference type="HAMAP" id="MF_00438">
    <property type="entry name" value="PSII_PsbM"/>
    <property type="match status" value="1"/>
</dbReference>
<dbReference type="InterPro" id="IPR007826">
    <property type="entry name" value="PSII_PsbM"/>
</dbReference>
<dbReference type="InterPro" id="IPR037269">
    <property type="entry name" value="PSII_PsbM_sf"/>
</dbReference>
<dbReference type="NCBIfam" id="TIGR03038">
    <property type="entry name" value="PS_II_psbM"/>
    <property type="match status" value="1"/>
</dbReference>
<dbReference type="PANTHER" id="PTHR35774">
    <property type="entry name" value="PHOTOSYSTEM II REACTION CENTER PROTEIN M"/>
    <property type="match status" value="1"/>
</dbReference>
<dbReference type="PANTHER" id="PTHR35774:SF1">
    <property type="entry name" value="PHOTOSYSTEM II REACTION CENTER PROTEIN M"/>
    <property type="match status" value="1"/>
</dbReference>
<dbReference type="Pfam" id="PF05151">
    <property type="entry name" value="PsbM"/>
    <property type="match status" value="1"/>
</dbReference>
<dbReference type="SUPFAM" id="SSF161033">
    <property type="entry name" value="Photosystem II reaction center protein M, PsbM"/>
    <property type="match status" value="1"/>
</dbReference>